<evidence type="ECO:0000250" key="1"/>
<evidence type="ECO:0000269" key="2">
    <source>
    </source>
</evidence>
<evidence type="ECO:0000269" key="3">
    <source>
    </source>
</evidence>
<reference key="1">
    <citation type="journal article" date="1993" name="J. Biol. Chem.">
        <title>Xenoxins, a family of peptides from dorsal gland secretion of Xenopus laevis related to snake venom cytotoxins and neurotoxins.</title>
        <authorList>
            <person name="Kolbe H.V.J."/>
            <person name="Huber A."/>
            <person name="Cordier P."/>
            <person name="Rasmussen U.B."/>
            <person name="Bouchon B."/>
            <person name="Jaquinod M."/>
            <person name="Vlasak R."/>
            <person name="Delot E.C."/>
            <person name="Kreil G."/>
        </authorList>
    </citation>
    <scope>NUCLEOTIDE SEQUENCE [MRNA]</scope>
    <scope>PROTEIN SEQUENCE OF 19-84</scope>
    <source>
        <tissue>Skin</tissue>
        <tissue>Skin secretion</tissue>
    </source>
</reference>
<reference key="2">
    <citation type="journal article" date="1994" name="Anal. Biochem.">
        <title>Purification of antimicrobial peptides from an extract of the skin of Xenopus laevis using heparin-affinity HPLC: characterization by ion-spray mass spectrometry.</title>
        <authorList>
            <person name="James S."/>
            <person name="Gibbs B.F."/>
            <person name="Toney K."/>
            <person name="Bennett H.P.J."/>
        </authorList>
    </citation>
    <scope>PROTEIN SEQUENCE OF 19-84</scope>
    <scope>MASS SPECTROMETRY</scope>
    <source>
        <tissue>Dorsal skin</tissue>
    </source>
</reference>
<sequence length="84" mass="9263">MRYAIVFFLVCVITLGEALKCVNLQANGIKMTQECAKEDTKCLTLRSLKKTLKFCASGRTCTTMKIMSLPGEQITCCEGNMCNA</sequence>
<comment type="function">
    <text>Lacks alpha-neurotoxic activity, has apparently no antibacterial activity, nor anti-coagulant potency.</text>
</comment>
<comment type="subcellular location">
    <subcellularLocation>
        <location>Secreted</location>
    </subcellularLocation>
</comment>
<comment type="tissue specificity">
    <text>Expressed by the skin dorsal glands.</text>
</comment>
<comment type="mass spectrometry" mass="7227.9" method="Electrospray" evidence="2"/>
<keyword id="KW-0878">Amphibian defense peptide</keyword>
<keyword id="KW-0903">Direct protein sequencing</keyword>
<keyword id="KW-1015">Disulfide bond</keyword>
<keyword id="KW-1185">Reference proteome</keyword>
<keyword id="KW-0964">Secreted</keyword>
<keyword id="KW-0732">Signal</keyword>
<name>XEN1_XENLA</name>
<proteinExistence type="evidence at protein level"/>
<feature type="signal peptide" evidence="2 3">
    <location>
        <begin position="1"/>
        <end position="18"/>
    </location>
</feature>
<feature type="chain" id="PRO_0000010304" description="Xenoxin-1">
    <location>
        <begin position="19"/>
        <end position="84"/>
    </location>
</feature>
<feature type="disulfide bond">
    <location>
        <begin position="21"/>
        <end position="42"/>
    </location>
</feature>
<feature type="disulfide bond">
    <location>
        <begin position="35"/>
        <end position="55"/>
    </location>
</feature>
<feature type="disulfide bond" evidence="1">
    <location>
        <begin position="61"/>
        <end position="76"/>
    </location>
</feature>
<feature type="disulfide bond" evidence="1">
    <location>
        <begin position="77"/>
        <end position="82"/>
    </location>
</feature>
<accession>Q09022</accession>
<accession>Q9PRX9</accession>
<gene>
    <name type="primary">xenoxin-1</name>
</gene>
<organism>
    <name type="scientific">Xenopus laevis</name>
    <name type="common">African clawed frog</name>
    <dbReference type="NCBI Taxonomy" id="8355"/>
    <lineage>
        <taxon>Eukaryota</taxon>
        <taxon>Metazoa</taxon>
        <taxon>Chordata</taxon>
        <taxon>Craniata</taxon>
        <taxon>Vertebrata</taxon>
        <taxon>Euteleostomi</taxon>
        <taxon>Amphibia</taxon>
        <taxon>Batrachia</taxon>
        <taxon>Anura</taxon>
        <taxon>Pipoidea</taxon>
        <taxon>Pipidae</taxon>
        <taxon>Xenopodinae</taxon>
        <taxon>Xenopus</taxon>
        <taxon>Xenopus</taxon>
    </lineage>
</organism>
<protein>
    <recommendedName>
        <fullName>Xenoxin-1</fullName>
    </recommendedName>
</protein>
<dbReference type="EMBL" id="X72673">
    <property type="protein sequence ID" value="CAA51225.1"/>
    <property type="molecule type" value="mRNA"/>
</dbReference>
<dbReference type="PIR" id="I51698">
    <property type="entry name" value="I51698"/>
</dbReference>
<dbReference type="SMR" id="Q09022"/>
<dbReference type="KEGG" id="xla:378596"/>
<dbReference type="AGR" id="Xenbase:XB-GENE-6252635"/>
<dbReference type="CTD" id="378596"/>
<dbReference type="Xenbase" id="XB-GENE-6252635">
    <property type="gene designation" value="xenoxin1.L"/>
</dbReference>
<dbReference type="OrthoDB" id="5945173at2759"/>
<dbReference type="Proteomes" id="UP000186698">
    <property type="component" value="Chromosome 9_10L"/>
</dbReference>
<dbReference type="Bgee" id="378596">
    <property type="expression patterns" value="Expressed in zone of skin and 8 other cell types or tissues"/>
</dbReference>
<dbReference type="GO" id="GO:0005576">
    <property type="term" value="C:extracellular region"/>
    <property type="evidence" value="ECO:0000314"/>
    <property type="project" value="UniProtKB"/>
</dbReference>
<dbReference type="GO" id="GO:0006952">
    <property type="term" value="P:defense response"/>
    <property type="evidence" value="ECO:0007669"/>
    <property type="project" value="UniProtKB-KW"/>
</dbReference>
<dbReference type="Gene3D" id="2.10.60.10">
    <property type="entry name" value="CD59"/>
    <property type="match status" value="1"/>
</dbReference>
<dbReference type="InterPro" id="IPR045860">
    <property type="entry name" value="Snake_toxin-like_sf"/>
</dbReference>
<dbReference type="SUPFAM" id="SSF57302">
    <property type="entry name" value="Snake toxin-like"/>
    <property type="match status" value="1"/>
</dbReference>